<evidence type="ECO:0000250" key="1"/>
<evidence type="ECO:0000255" key="2">
    <source>
        <dbReference type="PROSITE-ProRule" id="PRU00080"/>
    </source>
</evidence>
<evidence type="ECO:0000269" key="3">
    <source>
    </source>
</evidence>
<evidence type="ECO:0000269" key="4">
    <source>
    </source>
</evidence>
<evidence type="ECO:0000303" key="5">
    <source>
    </source>
</evidence>
<evidence type="ECO:0000303" key="6">
    <source>
    </source>
</evidence>
<evidence type="ECO:0000303" key="7">
    <source ref="5"/>
</evidence>
<evidence type="ECO:0000305" key="8"/>
<keyword id="KW-0025">Alternative splicing</keyword>
<keyword id="KW-0067">ATP-binding</keyword>
<keyword id="KW-0963">Cytoplasm</keyword>
<keyword id="KW-0547">Nucleotide-binding</keyword>
<keyword id="KW-0539">Nucleus</keyword>
<keyword id="KW-1185">Reference proteome</keyword>
<feature type="chain" id="PRO_0000274923" description="Actin-related protein 8">
    <location>
        <begin position="1"/>
        <end position="471"/>
    </location>
</feature>
<feature type="domain" description="F-box" evidence="2">
    <location>
        <begin position="40"/>
        <end position="86"/>
    </location>
</feature>
<feature type="binding site" evidence="1">
    <location>
        <begin position="256"/>
        <end position="259"/>
    </location>
    <ligand>
        <name>ATP</name>
        <dbReference type="ChEBI" id="CHEBI:30616"/>
    </ligand>
</feature>
<feature type="splice variant" id="VSP_022939" description="In isoform 3." evidence="7">
    <original>EF</original>
    <variation>VR</variation>
    <location>
        <begin position="164"/>
        <end position="165"/>
    </location>
</feature>
<feature type="splice variant" id="VSP_022940" description="In isoform 4." evidence="5">
    <location>
        <begin position="233"/>
        <end position="462"/>
    </location>
</feature>
<feature type="splice variant" id="VSP_022941" description="In isoform 2." evidence="6">
    <original>MRAMSLHQAVSLCMDHCDAAGLTG</original>
    <variation>IIVHKLVYEFHGFPYAYQGWAIFL</variation>
    <location>
        <begin position="364"/>
        <end position="387"/>
    </location>
</feature>
<feature type="splice variant" id="VSP_022942" description="In isoform 2." evidence="6">
    <location>
        <begin position="388"/>
        <end position="471"/>
    </location>
</feature>
<feature type="sequence conflict" description="In Ref. 1; AAM53249." evidence="8" ref="1">
    <original>Q</original>
    <variation>H</variation>
    <location>
        <position position="24"/>
    </location>
</feature>
<feature type="sequence conflict" description="In Ref. 4; AAO42095." evidence="8" ref="4">
    <original>Q</original>
    <variation>K</variation>
    <location>
        <position position="260"/>
    </location>
</feature>
<reference key="1">
    <citation type="journal article" date="2002" name="Plant Physiol.">
        <title>Arabidopsis contains ancient classes of differentially expressed actin-related protein genes.</title>
        <authorList>
            <person name="McKinney E.C."/>
            <person name="Kandasamy M.K."/>
            <person name="Meagher R.B."/>
        </authorList>
    </citation>
    <scope>NUCLEOTIDE SEQUENCE [MRNA] (ISOFORMS 1 AND 4)</scope>
    <scope>IDENTIFICATION</scope>
    <scope>TISSUE SPECIFICITY</scope>
    <scope>GENE FAMILY</scope>
    <source>
        <strain>cv. Columbia</strain>
    </source>
</reference>
<reference key="2">
    <citation type="journal article" date="1998" name="DNA Res.">
        <title>Structural analysis of Arabidopsis thaliana chromosome 5. V. Sequence features of the regions of 1,381,565 bp covered by twenty one physically assigned P1 and TAC clones.</title>
        <authorList>
            <person name="Kaneko T."/>
            <person name="Kotani H."/>
            <person name="Nakamura Y."/>
            <person name="Sato S."/>
            <person name="Asamizu E."/>
            <person name="Miyajima N."/>
            <person name="Tabata S."/>
        </authorList>
    </citation>
    <scope>NUCLEOTIDE SEQUENCE [LARGE SCALE GENOMIC DNA]</scope>
    <source>
        <strain>cv. Columbia</strain>
    </source>
</reference>
<reference key="3">
    <citation type="journal article" date="2017" name="Plant J.">
        <title>Araport11: a complete reannotation of the Arabidopsis thaliana reference genome.</title>
        <authorList>
            <person name="Cheng C.Y."/>
            <person name="Krishnakumar V."/>
            <person name="Chan A.P."/>
            <person name="Thibaud-Nissen F."/>
            <person name="Schobel S."/>
            <person name="Town C.D."/>
        </authorList>
    </citation>
    <scope>GENOME REANNOTATION</scope>
    <source>
        <strain>cv. Columbia</strain>
    </source>
</reference>
<reference key="4">
    <citation type="journal article" date="2003" name="Science">
        <title>Empirical analysis of transcriptional activity in the Arabidopsis genome.</title>
        <authorList>
            <person name="Yamada K."/>
            <person name="Lim J."/>
            <person name="Dale J.M."/>
            <person name="Chen H."/>
            <person name="Shinn P."/>
            <person name="Palm C.J."/>
            <person name="Southwick A.M."/>
            <person name="Wu H.C."/>
            <person name="Kim C.J."/>
            <person name="Nguyen M."/>
            <person name="Pham P.K."/>
            <person name="Cheuk R.F."/>
            <person name="Karlin-Newmann G."/>
            <person name="Liu S.X."/>
            <person name="Lam B."/>
            <person name="Sakano H."/>
            <person name="Wu T."/>
            <person name="Yu G."/>
            <person name="Miranda M."/>
            <person name="Quach H.L."/>
            <person name="Tripp M."/>
            <person name="Chang C.H."/>
            <person name="Lee J.M."/>
            <person name="Toriumi M.J."/>
            <person name="Chan M.M."/>
            <person name="Tang C.C."/>
            <person name="Onodera C.S."/>
            <person name="Deng J.M."/>
            <person name="Akiyama K."/>
            <person name="Ansari Y."/>
            <person name="Arakawa T."/>
            <person name="Banh J."/>
            <person name="Banno F."/>
            <person name="Bowser L."/>
            <person name="Brooks S.Y."/>
            <person name="Carninci P."/>
            <person name="Chao Q."/>
            <person name="Choy N."/>
            <person name="Enju A."/>
            <person name="Goldsmith A.D."/>
            <person name="Gurjal M."/>
            <person name="Hansen N.F."/>
            <person name="Hayashizaki Y."/>
            <person name="Johnson-Hopson C."/>
            <person name="Hsuan V.W."/>
            <person name="Iida K."/>
            <person name="Karnes M."/>
            <person name="Khan S."/>
            <person name="Koesema E."/>
            <person name="Ishida J."/>
            <person name="Jiang P.X."/>
            <person name="Jones T."/>
            <person name="Kawai J."/>
            <person name="Kamiya A."/>
            <person name="Meyers C."/>
            <person name="Nakajima M."/>
            <person name="Narusaka M."/>
            <person name="Seki M."/>
            <person name="Sakurai T."/>
            <person name="Satou M."/>
            <person name="Tamse R."/>
            <person name="Vaysberg M."/>
            <person name="Wallender E.K."/>
            <person name="Wong C."/>
            <person name="Yamamura Y."/>
            <person name="Yuan S."/>
            <person name="Shinozaki K."/>
            <person name="Davis R.W."/>
            <person name="Theologis A."/>
            <person name="Ecker J.R."/>
        </authorList>
    </citation>
    <scope>NUCLEOTIDE SEQUENCE [LARGE SCALE MRNA] (ISOFORM 2)</scope>
    <source>
        <strain>cv. Columbia</strain>
    </source>
</reference>
<reference key="5">
    <citation type="submission" date="2002-03" db="EMBL/GenBank/DDBJ databases">
        <title>Full-length cDNA from Arabidopsis thaliana.</title>
        <authorList>
            <person name="Brover V.V."/>
            <person name="Troukhan M.E."/>
            <person name="Alexandrov N.A."/>
            <person name="Lu Y.-P."/>
            <person name="Flavell R.B."/>
            <person name="Feldmann K.A."/>
        </authorList>
    </citation>
    <scope>NUCLEOTIDE SEQUENCE [LARGE SCALE MRNA] (ISOFORM 3)</scope>
</reference>
<reference key="6">
    <citation type="journal article" date="2004" name="Trends Plant Sci.">
        <title>Plant actin-related proteins.</title>
        <authorList>
            <person name="Kandasamy M.K."/>
            <person name="Deal R.B."/>
            <person name="McKinney E.C."/>
            <person name="Meagher R.B."/>
        </authorList>
    </citation>
    <scope>REVIEW</scope>
    <scope>GENE FAMILY</scope>
    <scope>NOMENCLATURE</scope>
</reference>
<reference key="7">
    <citation type="journal article" date="2008" name="Plant Cell Physiol.">
        <title>ACTIN-RELATED PROTEIN8 encodes an F-box protein localized to the nucleolus in Arabidopsis.</title>
        <authorList>
            <person name="Kandasamy M.K."/>
            <person name="McKinney E.C."/>
            <person name="Meagher R.B."/>
        </authorList>
    </citation>
    <scope>SUBCELLULAR LOCATION</scope>
    <scope>TISSUE SPECIFICITY</scope>
</reference>
<name>ARP8_ARATH</name>
<sequence length="471" mass="52510">MILKKVWGSVWNRSNSGKDLVNHQRAIDVPPLLLSSSSSLGAFDQLPMDILVQILMMMEPKDAVKLGLTCKAWKCVASGNRLWIFYLQCSQEPWDSIFFAETSLRSGYPLRMISSQSGELSFMHIYSQRAQVPGSIIIDGGSGYCKFGWSKYASPSGRSATFLEFGNIESPIYARLQQFFATIFTRMQVKPSMQPIVVSLPLCHFDDTESAKASRRQLKTAIFNVLFDMNVPAVCAVNQAVLALYAARRTSGIVVNIGFQVITILPILHGKVMRQVGVEVIGFGALKLTGFLKEKMQENNISFQSLYTVRTLKEKLCYVALDYKAELSKDTQASVEVSGEGWFTLSKERFQTGEILFQPRLAGMRAMSLHQAVSLCMDHCDAAGLTGDDSWFKTVVLTGGSACLPGLSERLERELQDHLPSSISNGIRVIPPPYGVDTSWHGAKLISNLSIFPGPWCITRKQFRRKSRLMW</sequence>
<accession>Q9FKT0</accession>
<accession>Q7PCC3</accession>
<accession>Q84WA6</accession>
<accession>Q8L8Z7</accession>
<accession>Q8LKQ9</accession>
<dbReference type="EMBL" id="AF507916">
    <property type="protein sequence ID" value="AAM53248.1"/>
    <property type="molecule type" value="mRNA"/>
</dbReference>
<dbReference type="EMBL" id="AF507917">
    <property type="protein sequence ID" value="AAM53249.1"/>
    <property type="molecule type" value="mRNA"/>
</dbReference>
<dbReference type="EMBL" id="AB011476">
    <property type="protein sequence ID" value="BAB09300.1"/>
    <property type="molecule type" value="Genomic_DNA"/>
</dbReference>
<dbReference type="EMBL" id="CP002688">
    <property type="protein sequence ID" value="AED96730.1"/>
    <property type="molecule type" value="Genomic_DNA"/>
</dbReference>
<dbReference type="EMBL" id="CP002688">
    <property type="protein sequence ID" value="AED96731.1"/>
    <property type="molecule type" value="Genomic_DNA"/>
</dbReference>
<dbReference type="EMBL" id="BT004068">
    <property type="protein sequence ID" value="AAO42095.1"/>
    <property type="molecule type" value="mRNA"/>
</dbReference>
<dbReference type="EMBL" id="AY088717">
    <property type="protein sequence ID" value="AAM67035.1"/>
    <property type="molecule type" value="mRNA"/>
</dbReference>
<dbReference type="EMBL" id="BK000426">
    <property type="protein sequence ID" value="DAA00031.1"/>
    <property type="molecule type" value="Genomic_DNA"/>
</dbReference>
<dbReference type="EMBL" id="BK000426">
    <property type="protein sequence ID" value="DAA00032.1"/>
    <property type="molecule type" value="Genomic_DNA"/>
</dbReference>
<dbReference type="RefSeq" id="NP_568836.2">
    <molecule id="Q9FKT0-1"/>
    <property type="nucleotide sequence ID" value="NM_125000.4"/>
</dbReference>
<dbReference type="RefSeq" id="NP_974940.1">
    <molecule id="Q9FKT0-2"/>
    <property type="nucleotide sequence ID" value="NM_203211.1"/>
</dbReference>
<dbReference type="SMR" id="Q9FKT0"/>
<dbReference type="FunCoup" id="Q9FKT0">
    <property type="interactions" value="776"/>
</dbReference>
<dbReference type="STRING" id="3702.Q9FKT0"/>
<dbReference type="PaxDb" id="3702-AT5G56180.1"/>
<dbReference type="ProteomicsDB" id="246891">
    <molecule id="Q9FKT0-1"/>
</dbReference>
<dbReference type="EnsemblPlants" id="AT5G56180.1">
    <molecule id="Q9FKT0-1"/>
    <property type="protein sequence ID" value="AT5G56180.1"/>
    <property type="gene ID" value="AT5G56180"/>
</dbReference>
<dbReference type="EnsemblPlants" id="AT5G56180.2">
    <molecule id="Q9FKT0-2"/>
    <property type="protein sequence ID" value="AT5G56180.2"/>
    <property type="gene ID" value="AT5G56180"/>
</dbReference>
<dbReference type="GeneID" id="835717"/>
<dbReference type="Gramene" id="AT5G56180.1">
    <molecule id="Q9FKT0-1"/>
    <property type="protein sequence ID" value="AT5G56180.1"/>
    <property type="gene ID" value="AT5G56180"/>
</dbReference>
<dbReference type="Gramene" id="AT5G56180.2">
    <molecule id="Q9FKT0-2"/>
    <property type="protein sequence ID" value="AT5G56180.2"/>
    <property type="gene ID" value="AT5G56180"/>
</dbReference>
<dbReference type="KEGG" id="ath:AT5G56180"/>
<dbReference type="Araport" id="AT5G56180"/>
<dbReference type="TAIR" id="AT5G56180">
    <property type="gene designation" value="ARP8"/>
</dbReference>
<dbReference type="eggNOG" id="KOG0676">
    <property type="taxonomic scope" value="Eukaryota"/>
</dbReference>
<dbReference type="HOGENOM" id="CLU_036757_0_0_1"/>
<dbReference type="InParanoid" id="Q9FKT0"/>
<dbReference type="PhylomeDB" id="Q9FKT0"/>
<dbReference type="PRO" id="PR:Q9FKT0"/>
<dbReference type="Proteomes" id="UP000006548">
    <property type="component" value="Chromosome 5"/>
</dbReference>
<dbReference type="ExpressionAtlas" id="Q9FKT0">
    <property type="expression patterns" value="baseline and differential"/>
</dbReference>
<dbReference type="GO" id="GO:0005737">
    <property type="term" value="C:cytoplasm"/>
    <property type="evidence" value="ECO:0007669"/>
    <property type="project" value="UniProtKB-SubCell"/>
</dbReference>
<dbReference type="GO" id="GO:0005730">
    <property type="term" value="C:nucleolus"/>
    <property type="evidence" value="ECO:0007669"/>
    <property type="project" value="UniProtKB-SubCell"/>
</dbReference>
<dbReference type="GO" id="GO:0005634">
    <property type="term" value="C:nucleus"/>
    <property type="evidence" value="ECO:0000304"/>
    <property type="project" value="TAIR"/>
</dbReference>
<dbReference type="GO" id="GO:0005524">
    <property type="term" value="F:ATP binding"/>
    <property type="evidence" value="ECO:0007669"/>
    <property type="project" value="UniProtKB-KW"/>
</dbReference>
<dbReference type="GO" id="GO:0005200">
    <property type="term" value="F:structural constituent of cytoskeleton"/>
    <property type="evidence" value="ECO:0000250"/>
    <property type="project" value="TAIR"/>
</dbReference>
<dbReference type="GO" id="GO:0030029">
    <property type="term" value="P:actin filament-based process"/>
    <property type="evidence" value="ECO:0000304"/>
    <property type="project" value="TAIR"/>
</dbReference>
<dbReference type="CDD" id="cd13396">
    <property type="entry name" value="ASKHA_NBD_AtArp8-like"/>
    <property type="match status" value="1"/>
</dbReference>
<dbReference type="CDD" id="cd22156">
    <property type="entry name" value="F-box_AtARP8-like"/>
    <property type="match status" value="1"/>
</dbReference>
<dbReference type="Gene3D" id="1.20.1280.50">
    <property type="match status" value="1"/>
</dbReference>
<dbReference type="Gene3D" id="3.30.420.40">
    <property type="match status" value="2"/>
</dbReference>
<dbReference type="Gene3D" id="3.90.640.10">
    <property type="entry name" value="Actin, Chain A, domain 4"/>
    <property type="match status" value="1"/>
</dbReference>
<dbReference type="InterPro" id="IPR004000">
    <property type="entry name" value="Actin"/>
</dbReference>
<dbReference type="InterPro" id="IPR043129">
    <property type="entry name" value="ATPase_NBD"/>
</dbReference>
<dbReference type="InterPro" id="IPR036047">
    <property type="entry name" value="F-box-like_dom_sf"/>
</dbReference>
<dbReference type="InterPro" id="IPR001810">
    <property type="entry name" value="F-box_dom"/>
</dbReference>
<dbReference type="PANTHER" id="PTHR11937">
    <property type="entry name" value="ACTIN"/>
    <property type="match status" value="1"/>
</dbReference>
<dbReference type="Pfam" id="PF00022">
    <property type="entry name" value="Actin"/>
    <property type="match status" value="1"/>
</dbReference>
<dbReference type="Pfam" id="PF12937">
    <property type="entry name" value="F-box-like"/>
    <property type="match status" value="1"/>
</dbReference>
<dbReference type="SMART" id="SM00268">
    <property type="entry name" value="ACTIN"/>
    <property type="match status" value="1"/>
</dbReference>
<dbReference type="SMART" id="SM00256">
    <property type="entry name" value="FBOX"/>
    <property type="match status" value="1"/>
</dbReference>
<dbReference type="SUPFAM" id="SSF53067">
    <property type="entry name" value="Actin-like ATPase domain"/>
    <property type="match status" value="2"/>
</dbReference>
<dbReference type="SUPFAM" id="SSF81383">
    <property type="entry name" value="F-box domain"/>
    <property type="match status" value="1"/>
</dbReference>
<dbReference type="PROSITE" id="PS50181">
    <property type="entry name" value="FBOX"/>
    <property type="match status" value="1"/>
</dbReference>
<protein>
    <recommendedName>
        <fullName>Actin-related protein 8</fullName>
    </recommendedName>
    <alternativeName>
        <fullName>F-box protein ARP8</fullName>
    </alternativeName>
</protein>
<organism>
    <name type="scientific">Arabidopsis thaliana</name>
    <name type="common">Mouse-ear cress</name>
    <dbReference type="NCBI Taxonomy" id="3702"/>
    <lineage>
        <taxon>Eukaryota</taxon>
        <taxon>Viridiplantae</taxon>
        <taxon>Streptophyta</taxon>
        <taxon>Embryophyta</taxon>
        <taxon>Tracheophyta</taxon>
        <taxon>Spermatophyta</taxon>
        <taxon>Magnoliopsida</taxon>
        <taxon>eudicotyledons</taxon>
        <taxon>Gunneridae</taxon>
        <taxon>Pentapetalae</taxon>
        <taxon>rosids</taxon>
        <taxon>malvids</taxon>
        <taxon>Brassicales</taxon>
        <taxon>Brassicaceae</taxon>
        <taxon>Camelineae</taxon>
        <taxon>Arabidopsis</taxon>
    </lineage>
</organism>
<gene>
    <name type="primary">ARP8</name>
    <name type="ordered locus">At5g56180</name>
    <name type="ORF">MDA7.26</name>
</gene>
<comment type="subcellular location">
    <subcellularLocation>
        <location evidence="4">Nucleus</location>
        <location evidence="4">Nucleolus</location>
    </subcellularLocation>
    <subcellularLocation>
        <location evidence="4">Cytoplasm</location>
    </subcellularLocation>
    <text>Localized to the nucleolus in interphase cells and dispersed in the cytoplasm in mitotic cells.</text>
</comment>
<comment type="alternative products">
    <event type="alternative splicing"/>
    <isoform>
        <id>Q9FKT0-1</id>
        <name>1</name>
        <name>ARP8B</name>
        <sequence type="displayed"/>
    </isoform>
    <isoform>
        <id>Q9FKT0-2</id>
        <name>2</name>
        <sequence type="described" ref="VSP_022941 VSP_022942"/>
    </isoform>
    <isoform>
        <id>Q9FKT0-3</id>
        <name>3</name>
        <sequence type="described" ref="VSP_022939"/>
    </isoform>
    <isoform>
        <id>Q9FKT0-4</id>
        <name>4</name>
        <name>ARP8A</name>
        <sequence type="described" ref="VSP_022940"/>
    </isoform>
</comment>
<comment type="tissue specificity">
    <text evidence="3 4">Ubiquitously expressed in all organs and cell types. Higher expression in seedlings.</text>
</comment>
<comment type="similarity">
    <text evidence="8">Belongs to the actin family. Plant ARP8 subfamily.</text>
</comment>
<proteinExistence type="evidence at transcript level"/>